<keyword id="KW-0028">Amino-acid biosynthesis</keyword>
<keyword id="KW-0963">Cytoplasm</keyword>
<keyword id="KW-0368">Histidine biosynthesis</keyword>
<keyword id="KW-0456">Lyase</keyword>
<protein>
    <recommendedName>
        <fullName evidence="1">Imidazole glycerol phosphate synthase subunit HisF</fullName>
        <ecNumber evidence="1">4.3.2.10</ecNumber>
    </recommendedName>
    <alternativeName>
        <fullName evidence="1">IGP synthase cyclase subunit</fullName>
    </alternativeName>
    <alternativeName>
        <fullName evidence="1">IGP synthase subunit HisF</fullName>
    </alternativeName>
    <alternativeName>
        <fullName evidence="1">ImGP synthase subunit HisF</fullName>
        <shortName evidence="1">IGPS subunit HisF</shortName>
    </alternativeName>
</protein>
<feature type="chain" id="PRO_1000063173" description="Imidazole glycerol phosphate synthase subunit HisF">
    <location>
        <begin position="1"/>
        <end position="258"/>
    </location>
</feature>
<feature type="active site" evidence="1">
    <location>
        <position position="11"/>
    </location>
</feature>
<feature type="active site" evidence="1">
    <location>
        <position position="130"/>
    </location>
</feature>
<gene>
    <name evidence="1" type="primary">hisF</name>
    <name type="ordered locus">YE2771</name>
</gene>
<dbReference type="EC" id="4.3.2.10" evidence="1"/>
<dbReference type="EMBL" id="AM286415">
    <property type="protein sequence ID" value="CAL12805.1"/>
    <property type="molecule type" value="Genomic_DNA"/>
</dbReference>
<dbReference type="RefSeq" id="WP_005168354.1">
    <property type="nucleotide sequence ID" value="NC_008800.1"/>
</dbReference>
<dbReference type="RefSeq" id="YP_001006962.1">
    <property type="nucleotide sequence ID" value="NC_008800.1"/>
</dbReference>
<dbReference type="SMR" id="A1JTW3"/>
<dbReference type="KEGG" id="yen:YE2771"/>
<dbReference type="PATRIC" id="fig|393305.7.peg.2944"/>
<dbReference type="eggNOG" id="COG0107">
    <property type="taxonomic scope" value="Bacteria"/>
</dbReference>
<dbReference type="HOGENOM" id="CLU_048577_4_0_6"/>
<dbReference type="OrthoDB" id="9781903at2"/>
<dbReference type="UniPathway" id="UPA00031">
    <property type="reaction ID" value="UER00010"/>
</dbReference>
<dbReference type="Proteomes" id="UP000000642">
    <property type="component" value="Chromosome"/>
</dbReference>
<dbReference type="GO" id="GO:0005737">
    <property type="term" value="C:cytoplasm"/>
    <property type="evidence" value="ECO:0007669"/>
    <property type="project" value="UniProtKB-SubCell"/>
</dbReference>
<dbReference type="GO" id="GO:0000107">
    <property type="term" value="F:imidazoleglycerol-phosphate synthase activity"/>
    <property type="evidence" value="ECO:0007669"/>
    <property type="project" value="UniProtKB-UniRule"/>
</dbReference>
<dbReference type="GO" id="GO:0016829">
    <property type="term" value="F:lyase activity"/>
    <property type="evidence" value="ECO:0007669"/>
    <property type="project" value="UniProtKB-KW"/>
</dbReference>
<dbReference type="GO" id="GO:0000105">
    <property type="term" value="P:L-histidine biosynthetic process"/>
    <property type="evidence" value="ECO:0007669"/>
    <property type="project" value="UniProtKB-UniRule"/>
</dbReference>
<dbReference type="CDD" id="cd04731">
    <property type="entry name" value="HisF"/>
    <property type="match status" value="1"/>
</dbReference>
<dbReference type="FunFam" id="3.20.20.70:FF:000006">
    <property type="entry name" value="Imidazole glycerol phosphate synthase subunit HisF"/>
    <property type="match status" value="1"/>
</dbReference>
<dbReference type="Gene3D" id="3.20.20.70">
    <property type="entry name" value="Aldolase class I"/>
    <property type="match status" value="1"/>
</dbReference>
<dbReference type="HAMAP" id="MF_01013">
    <property type="entry name" value="HisF"/>
    <property type="match status" value="1"/>
</dbReference>
<dbReference type="InterPro" id="IPR013785">
    <property type="entry name" value="Aldolase_TIM"/>
</dbReference>
<dbReference type="InterPro" id="IPR006062">
    <property type="entry name" value="His_biosynth"/>
</dbReference>
<dbReference type="InterPro" id="IPR004651">
    <property type="entry name" value="HisF"/>
</dbReference>
<dbReference type="InterPro" id="IPR050064">
    <property type="entry name" value="IGPS_HisA/HisF"/>
</dbReference>
<dbReference type="InterPro" id="IPR011060">
    <property type="entry name" value="RibuloseP-bd_barrel"/>
</dbReference>
<dbReference type="NCBIfam" id="TIGR00735">
    <property type="entry name" value="hisF"/>
    <property type="match status" value="1"/>
</dbReference>
<dbReference type="PANTHER" id="PTHR21235:SF2">
    <property type="entry name" value="IMIDAZOLE GLYCEROL PHOSPHATE SYNTHASE HISHF"/>
    <property type="match status" value="1"/>
</dbReference>
<dbReference type="PANTHER" id="PTHR21235">
    <property type="entry name" value="IMIDAZOLE GLYCEROL PHOSPHATE SYNTHASE SUBUNIT HISF/H IGP SYNTHASE SUBUNIT HISF/H"/>
    <property type="match status" value="1"/>
</dbReference>
<dbReference type="Pfam" id="PF00977">
    <property type="entry name" value="His_biosynth"/>
    <property type="match status" value="1"/>
</dbReference>
<dbReference type="SUPFAM" id="SSF51366">
    <property type="entry name" value="Ribulose-phoshate binding barrel"/>
    <property type="match status" value="1"/>
</dbReference>
<sequence>MLAKRIIPCLDVKDGQVVKGVQFRNHEIIGDIVPLAQRYAQEGADELVFYDITASSDGRVVDKSWVSRVAEVIDIPFCVAGGIKSVEDAGQILTFGADKISINSPALADPTLITRLADRYGVQCIVVGIDTWYDEESDSYQVYQFTGDEKRTKATTWQTEDWIKEVQLRGAGEIVLNMMNQDGVRNGYDLRQLKQMRTICHVPLIASGGAGTSEHFLEAFRDADVDGALAASVFHKQIINIGELKKYLSEQGVEIRVC</sequence>
<comment type="function">
    <text evidence="1">IGPS catalyzes the conversion of PRFAR and glutamine to IGP, AICAR and glutamate. The HisF subunit catalyzes the cyclization activity that produces IGP and AICAR from PRFAR using the ammonia provided by the HisH subunit.</text>
</comment>
<comment type="catalytic activity">
    <reaction evidence="1">
        <text>5-[(5-phospho-1-deoxy-D-ribulos-1-ylimino)methylamino]-1-(5-phospho-beta-D-ribosyl)imidazole-4-carboxamide + L-glutamine = D-erythro-1-(imidazol-4-yl)glycerol 3-phosphate + 5-amino-1-(5-phospho-beta-D-ribosyl)imidazole-4-carboxamide + L-glutamate + H(+)</text>
        <dbReference type="Rhea" id="RHEA:24793"/>
        <dbReference type="ChEBI" id="CHEBI:15378"/>
        <dbReference type="ChEBI" id="CHEBI:29985"/>
        <dbReference type="ChEBI" id="CHEBI:58278"/>
        <dbReference type="ChEBI" id="CHEBI:58359"/>
        <dbReference type="ChEBI" id="CHEBI:58475"/>
        <dbReference type="ChEBI" id="CHEBI:58525"/>
        <dbReference type="EC" id="4.3.2.10"/>
    </reaction>
</comment>
<comment type="pathway">
    <text evidence="1">Amino-acid biosynthesis; L-histidine biosynthesis; L-histidine from 5-phospho-alpha-D-ribose 1-diphosphate: step 5/9.</text>
</comment>
<comment type="subunit">
    <text evidence="1">Heterodimer of HisH and HisF.</text>
</comment>
<comment type="subcellular location">
    <subcellularLocation>
        <location evidence="1">Cytoplasm</location>
    </subcellularLocation>
</comment>
<comment type="similarity">
    <text evidence="1">Belongs to the HisA/HisF family.</text>
</comment>
<evidence type="ECO:0000255" key="1">
    <source>
        <dbReference type="HAMAP-Rule" id="MF_01013"/>
    </source>
</evidence>
<name>HIS6_YERE8</name>
<accession>A1JTW3</accession>
<organism>
    <name type="scientific">Yersinia enterocolitica serotype O:8 / biotype 1B (strain NCTC 13174 / 8081)</name>
    <dbReference type="NCBI Taxonomy" id="393305"/>
    <lineage>
        <taxon>Bacteria</taxon>
        <taxon>Pseudomonadati</taxon>
        <taxon>Pseudomonadota</taxon>
        <taxon>Gammaproteobacteria</taxon>
        <taxon>Enterobacterales</taxon>
        <taxon>Yersiniaceae</taxon>
        <taxon>Yersinia</taxon>
    </lineage>
</organism>
<reference key="1">
    <citation type="journal article" date="2006" name="PLoS Genet.">
        <title>The complete genome sequence and comparative genome analysis of the high pathogenicity Yersinia enterocolitica strain 8081.</title>
        <authorList>
            <person name="Thomson N.R."/>
            <person name="Howard S."/>
            <person name="Wren B.W."/>
            <person name="Holden M.T.G."/>
            <person name="Crossman L."/>
            <person name="Challis G.L."/>
            <person name="Churcher C."/>
            <person name="Mungall K."/>
            <person name="Brooks K."/>
            <person name="Chillingworth T."/>
            <person name="Feltwell T."/>
            <person name="Abdellah Z."/>
            <person name="Hauser H."/>
            <person name="Jagels K."/>
            <person name="Maddison M."/>
            <person name="Moule S."/>
            <person name="Sanders M."/>
            <person name="Whitehead S."/>
            <person name="Quail M.A."/>
            <person name="Dougan G."/>
            <person name="Parkhill J."/>
            <person name="Prentice M.B."/>
        </authorList>
    </citation>
    <scope>NUCLEOTIDE SEQUENCE [LARGE SCALE GENOMIC DNA]</scope>
    <source>
        <strain>NCTC 13174 / 8081</strain>
    </source>
</reference>
<proteinExistence type="inferred from homology"/>